<comment type="function">
    <text evidence="1">Specifically methylates guanosine-37 in various tRNAs.</text>
</comment>
<comment type="catalytic activity">
    <reaction evidence="1">
        <text>guanosine(37) in tRNA + S-adenosyl-L-methionine = N(1)-methylguanosine(37) in tRNA + S-adenosyl-L-homocysteine + H(+)</text>
        <dbReference type="Rhea" id="RHEA:36899"/>
        <dbReference type="Rhea" id="RHEA-COMP:10145"/>
        <dbReference type="Rhea" id="RHEA-COMP:10147"/>
        <dbReference type="ChEBI" id="CHEBI:15378"/>
        <dbReference type="ChEBI" id="CHEBI:57856"/>
        <dbReference type="ChEBI" id="CHEBI:59789"/>
        <dbReference type="ChEBI" id="CHEBI:73542"/>
        <dbReference type="ChEBI" id="CHEBI:74269"/>
        <dbReference type="EC" id="2.1.1.228"/>
    </reaction>
</comment>
<comment type="subunit">
    <text evidence="1">Homodimer.</text>
</comment>
<comment type="subcellular location">
    <subcellularLocation>
        <location evidence="1">Cytoplasm</location>
    </subcellularLocation>
</comment>
<comment type="similarity">
    <text evidence="1">Belongs to the RNA methyltransferase TrmD family.</text>
</comment>
<name>TRMD_SULSY</name>
<gene>
    <name evidence="1" type="primary">trmD</name>
    <name type="ordered locus">SYO3AOP1_0118</name>
</gene>
<sequence length="254" mass="29084">MKIYIITIFPDYFECFKNYGVVNKAIKSGLVEINTINLRDFTSDKHKTVDDVVYGGGPGMLLKPEPIFKAFDYIKNISKNPYTIITEPWGKTFNQEMARKLAEKEELVIICGRYEGVDERVKTLVDEEISIGDYILSGGEPATLVIMDSVIRLLPGVLSDDESKEVDSFSDGLLGYPNYTRPAEFRGMKVPEVLLSGNHKLIEKWRRFQKLKRTYKNRPDLLEKAKLSVEDKQLLKYIIEGKEFEDLIKEGKIA</sequence>
<protein>
    <recommendedName>
        <fullName evidence="1">tRNA (guanine-N(1)-)-methyltransferase</fullName>
        <ecNumber evidence="1">2.1.1.228</ecNumber>
    </recommendedName>
    <alternativeName>
        <fullName evidence="1">M1G-methyltransferase</fullName>
    </alternativeName>
    <alternativeName>
        <fullName evidence="1">tRNA [GM37] methyltransferase</fullName>
    </alternativeName>
</protein>
<feature type="chain" id="PRO_1000130217" description="tRNA (guanine-N(1)-)-methyltransferase">
    <location>
        <begin position="1"/>
        <end position="254"/>
    </location>
</feature>
<feature type="binding site" evidence="1">
    <location>
        <position position="112"/>
    </location>
    <ligand>
        <name>S-adenosyl-L-methionine</name>
        <dbReference type="ChEBI" id="CHEBI:59789"/>
    </ligand>
</feature>
<feature type="binding site" evidence="1">
    <location>
        <begin position="131"/>
        <end position="136"/>
    </location>
    <ligand>
        <name>S-adenosyl-L-methionine</name>
        <dbReference type="ChEBI" id="CHEBI:59789"/>
    </ligand>
</feature>
<keyword id="KW-0963">Cytoplasm</keyword>
<keyword id="KW-0489">Methyltransferase</keyword>
<keyword id="KW-0949">S-adenosyl-L-methionine</keyword>
<keyword id="KW-0808">Transferase</keyword>
<keyword id="KW-0819">tRNA processing</keyword>
<reference key="1">
    <citation type="journal article" date="2009" name="J. Bacteriol.">
        <title>Complete and draft genome sequences of six members of the Aquificales.</title>
        <authorList>
            <person name="Reysenbach A.-L."/>
            <person name="Hamamura N."/>
            <person name="Podar M."/>
            <person name="Griffiths E."/>
            <person name="Ferreira S."/>
            <person name="Hochstein R."/>
            <person name="Heidelberg J."/>
            <person name="Johnson J."/>
            <person name="Mead D."/>
            <person name="Pohorille A."/>
            <person name="Sarmiento M."/>
            <person name="Schweighofer K."/>
            <person name="Seshadri R."/>
            <person name="Voytek M.A."/>
        </authorList>
    </citation>
    <scope>NUCLEOTIDE SEQUENCE [LARGE SCALE GENOMIC DNA]</scope>
    <source>
        <strain>YO3AOP1</strain>
    </source>
</reference>
<evidence type="ECO:0000255" key="1">
    <source>
        <dbReference type="HAMAP-Rule" id="MF_00605"/>
    </source>
</evidence>
<proteinExistence type="inferred from homology"/>
<accession>B2V6N2</accession>
<dbReference type="EC" id="2.1.1.228" evidence="1"/>
<dbReference type="EMBL" id="CP001080">
    <property type="protein sequence ID" value="ACD65764.1"/>
    <property type="molecule type" value="Genomic_DNA"/>
</dbReference>
<dbReference type="RefSeq" id="WP_012458856.1">
    <property type="nucleotide sequence ID" value="NC_010730.1"/>
</dbReference>
<dbReference type="SMR" id="B2V6N2"/>
<dbReference type="STRING" id="436114.SYO3AOP1_0118"/>
<dbReference type="KEGG" id="sul:SYO3AOP1_0118"/>
<dbReference type="eggNOG" id="COG0336">
    <property type="taxonomic scope" value="Bacteria"/>
</dbReference>
<dbReference type="HOGENOM" id="CLU_047363_0_1_0"/>
<dbReference type="GO" id="GO:0005829">
    <property type="term" value="C:cytosol"/>
    <property type="evidence" value="ECO:0007669"/>
    <property type="project" value="TreeGrafter"/>
</dbReference>
<dbReference type="GO" id="GO:0052906">
    <property type="term" value="F:tRNA (guanine(37)-N1)-methyltransferase activity"/>
    <property type="evidence" value="ECO:0007669"/>
    <property type="project" value="UniProtKB-UniRule"/>
</dbReference>
<dbReference type="GO" id="GO:0002939">
    <property type="term" value="P:tRNA N1-guanine methylation"/>
    <property type="evidence" value="ECO:0007669"/>
    <property type="project" value="TreeGrafter"/>
</dbReference>
<dbReference type="CDD" id="cd18080">
    <property type="entry name" value="TrmD-like"/>
    <property type="match status" value="1"/>
</dbReference>
<dbReference type="FunFam" id="1.10.1270.20:FF:000001">
    <property type="entry name" value="tRNA (guanine-N(1)-)-methyltransferase"/>
    <property type="match status" value="1"/>
</dbReference>
<dbReference type="FunFam" id="3.40.1280.10:FF:000001">
    <property type="entry name" value="tRNA (guanine-N(1)-)-methyltransferase"/>
    <property type="match status" value="1"/>
</dbReference>
<dbReference type="Gene3D" id="3.40.1280.10">
    <property type="match status" value="1"/>
</dbReference>
<dbReference type="Gene3D" id="1.10.1270.20">
    <property type="entry name" value="tRNA(m1g37)methyltransferase, domain 2"/>
    <property type="match status" value="1"/>
</dbReference>
<dbReference type="HAMAP" id="MF_00605">
    <property type="entry name" value="TrmD"/>
    <property type="match status" value="1"/>
</dbReference>
<dbReference type="InterPro" id="IPR029028">
    <property type="entry name" value="Alpha/beta_knot_MTases"/>
</dbReference>
<dbReference type="InterPro" id="IPR023148">
    <property type="entry name" value="tRNA_m1G_MeTrfase_C_sf"/>
</dbReference>
<dbReference type="InterPro" id="IPR002649">
    <property type="entry name" value="tRNA_m1G_MeTrfase_TrmD"/>
</dbReference>
<dbReference type="InterPro" id="IPR029026">
    <property type="entry name" value="tRNA_m1G_MTases_N"/>
</dbReference>
<dbReference type="InterPro" id="IPR016009">
    <property type="entry name" value="tRNA_MeTrfase_TRMD/TRM10"/>
</dbReference>
<dbReference type="NCBIfam" id="NF000648">
    <property type="entry name" value="PRK00026.1"/>
    <property type="match status" value="1"/>
</dbReference>
<dbReference type="NCBIfam" id="TIGR00088">
    <property type="entry name" value="trmD"/>
    <property type="match status" value="1"/>
</dbReference>
<dbReference type="PANTHER" id="PTHR46417">
    <property type="entry name" value="TRNA (GUANINE-N(1)-)-METHYLTRANSFERASE"/>
    <property type="match status" value="1"/>
</dbReference>
<dbReference type="PANTHER" id="PTHR46417:SF1">
    <property type="entry name" value="TRNA (GUANINE-N(1)-)-METHYLTRANSFERASE"/>
    <property type="match status" value="1"/>
</dbReference>
<dbReference type="Pfam" id="PF01746">
    <property type="entry name" value="tRNA_m1G_MT"/>
    <property type="match status" value="1"/>
</dbReference>
<dbReference type="PIRSF" id="PIRSF000386">
    <property type="entry name" value="tRNA_mtase"/>
    <property type="match status" value="1"/>
</dbReference>
<dbReference type="SUPFAM" id="SSF75217">
    <property type="entry name" value="alpha/beta knot"/>
    <property type="match status" value="1"/>
</dbReference>
<organism>
    <name type="scientific">Sulfurihydrogenibium sp. (strain YO3AOP1)</name>
    <dbReference type="NCBI Taxonomy" id="436114"/>
    <lineage>
        <taxon>Bacteria</taxon>
        <taxon>Pseudomonadati</taxon>
        <taxon>Aquificota</taxon>
        <taxon>Aquificia</taxon>
        <taxon>Aquificales</taxon>
        <taxon>Hydrogenothermaceae</taxon>
        <taxon>Sulfurihydrogenibium</taxon>
    </lineage>
</organism>